<comment type="function">
    <text evidence="1">Catalyzes the condensation of ATP and 5-phosphoribose 1-diphosphate to form N'-(5'-phosphoribosyl)-ATP (PR-ATP). Has a crucial role in the pathway because the rate of histidine biosynthesis seems to be controlled primarily by regulation of HisG enzymatic activity.</text>
</comment>
<comment type="catalytic activity">
    <reaction evidence="1">
        <text>1-(5-phospho-beta-D-ribosyl)-ATP + diphosphate = 5-phospho-alpha-D-ribose 1-diphosphate + ATP</text>
        <dbReference type="Rhea" id="RHEA:18473"/>
        <dbReference type="ChEBI" id="CHEBI:30616"/>
        <dbReference type="ChEBI" id="CHEBI:33019"/>
        <dbReference type="ChEBI" id="CHEBI:58017"/>
        <dbReference type="ChEBI" id="CHEBI:73183"/>
        <dbReference type="EC" id="2.4.2.17"/>
    </reaction>
</comment>
<comment type="cofactor">
    <cofactor evidence="1">
        <name>Mg(2+)</name>
        <dbReference type="ChEBI" id="CHEBI:18420"/>
    </cofactor>
</comment>
<comment type="activity regulation">
    <text evidence="1">Feedback inhibited by histidine.</text>
</comment>
<comment type="pathway">
    <text evidence="1">Amino-acid biosynthesis; L-histidine biosynthesis; L-histidine from 5-phospho-alpha-D-ribose 1-diphosphate: step 1/9.</text>
</comment>
<comment type="subcellular location">
    <subcellularLocation>
        <location evidence="1">Cytoplasm</location>
    </subcellularLocation>
</comment>
<comment type="similarity">
    <text evidence="1">Belongs to the ATP phosphoribosyltransferase family. Long subfamily.</text>
</comment>
<name>HIS1_STRCO</name>
<evidence type="ECO:0000255" key="1">
    <source>
        <dbReference type="HAMAP-Rule" id="MF_00079"/>
    </source>
</evidence>
<sequence>MLRIAVPNKGSLSGPAGEMLHEAGYQQRRESKELRIVDPVNEVEFFYLRPRDIAIYVSSGKLDIGITGRDLLVDSGAHAEEILPLGFARSTFRFAGKPGAATGIDDLKGRTVATSYEGIVAAHLADRGVDASVVHLDGAVETAIELGVAEVIADVVETGTSLRNAGLEVFGEPIMKSEAVVIRRSDAEPDETTEPKVQQFLRRLQGVLVARTYVMMDYDCRVEQLEKAVALTPGLESPTVSPLHNEGWVAVRAMVPAKEAQRIMDDLYEIGARAILTTAIHACRL</sequence>
<keyword id="KW-0028">Amino-acid biosynthesis</keyword>
<keyword id="KW-0067">ATP-binding</keyword>
<keyword id="KW-0963">Cytoplasm</keyword>
<keyword id="KW-0328">Glycosyltransferase</keyword>
<keyword id="KW-0368">Histidine biosynthesis</keyword>
<keyword id="KW-0460">Magnesium</keyword>
<keyword id="KW-0479">Metal-binding</keyword>
<keyword id="KW-0547">Nucleotide-binding</keyword>
<keyword id="KW-1185">Reference proteome</keyword>
<keyword id="KW-0808">Transferase</keyword>
<dbReference type="EC" id="2.4.2.17" evidence="1"/>
<dbReference type="EMBL" id="AL939108">
    <property type="protein sequence ID" value="CAD55174.1"/>
    <property type="molecule type" value="Genomic_DNA"/>
</dbReference>
<dbReference type="RefSeq" id="NP_733534.1">
    <property type="nucleotide sequence ID" value="NC_003888.3"/>
</dbReference>
<dbReference type="RefSeq" id="WP_003977387.1">
    <property type="nucleotide sequence ID" value="NZ_VNID01000029.1"/>
</dbReference>
<dbReference type="SMR" id="Q8CK28"/>
<dbReference type="FunCoup" id="Q8CK28">
    <property type="interactions" value="361"/>
</dbReference>
<dbReference type="STRING" id="100226.gene:17759024"/>
<dbReference type="PaxDb" id="100226-SCO1438"/>
<dbReference type="GeneID" id="91387593"/>
<dbReference type="KEGG" id="sco:SCO1438"/>
<dbReference type="PATRIC" id="fig|100226.15.peg.1448"/>
<dbReference type="eggNOG" id="COG0040">
    <property type="taxonomic scope" value="Bacteria"/>
</dbReference>
<dbReference type="HOGENOM" id="CLU_038115_1_1_11"/>
<dbReference type="InParanoid" id="Q8CK28"/>
<dbReference type="OrthoDB" id="9801867at2"/>
<dbReference type="PhylomeDB" id="Q8CK28"/>
<dbReference type="UniPathway" id="UPA00031">
    <property type="reaction ID" value="UER00006"/>
</dbReference>
<dbReference type="Proteomes" id="UP000001973">
    <property type="component" value="Chromosome"/>
</dbReference>
<dbReference type="GO" id="GO:0005737">
    <property type="term" value="C:cytoplasm"/>
    <property type="evidence" value="ECO:0007669"/>
    <property type="project" value="UniProtKB-SubCell"/>
</dbReference>
<dbReference type="GO" id="GO:0005524">
    <property type="term" value="F:ATP binding"/>
    <property type="evidence" value="ECO:0007669"/>
    <property type="project" value="UniProtKB-KW"/>
</dbReference>
<dbReference type="GO" id="GO:0003879">
    <property type="term" value="F:ATP phosphoribosyltransferase activity"/>
    <property type="evidence" value="ECO:0000318"/>
    <property type="project" value="GO_Central"/>
</dbReference>
<dbReference type="GO" id="GO:0000287">
    <property type="term" value="F:magnesium ion binding"/>
    <property type="evidence" value="ECO:0007669"/>
    <property type="project" value="UniProtKB-UniRule"/>
</dbReference>
<dbReference type="GO" id="GO:0000105">
    <property type="term" value="P:L-histidine biosynthetic process"/>
    <property type="evidence" value="ECO:0000318"/>
    <property type="project" value="GO_Central"/>
</dbReference>
<dbReference type="CDD" id="cd13591">
    <property type="entry name" value="PBP2_HisGL1"/>
    <property type="match status" value="1"/>
</dbReference>
<dbReference type="FunFam" id="3.30.70.120:FF:000003">
    <property type="entry name" value="ATP phosphoribosyltransferase"/>
    <property type="match status" value="1"/>
</dbReference>
<dbReference type="Gene3D" id="3.30.70.120">
    <property type="match status" value="1"/>
</dbReference>
<dbReference type="Gene3D" id="3.40.190.10">
    <property type="entry name" value="Periplasmic binding protein-like II"/>
    <property type="match status" value="2"/>
</dbReference>
<dbReference type="HAMAP" id="MF_00079">
    <property type="entry name" value="HisG_Long"/>
    <property type="match status" value="1"/>
</dbReference>
<dbReference type="InterPro" id="IPR020621">
    <property type="entry name" value="ATP-PRT_HisG_long"/>
</dbReference>
<dbReference type="InterPro" id="IPR013820">
    <property type="entry name" value="ATP_PRibTrfase_cat"/>
</dbReference>
<dbReference type="InterPro" id="IPR001348">
    <property type="entry name" value="ATP_PRibTrfase_HisG"/>
</dbReference>
<dbReference type="InterPro" id="IPR013115">
    <property type="entry name" value="HisG_C"/>
</dbReference>
<dbReference type="InterPro" id="IPR011322">
    <property type="entry name" value="N-reg_PII-like_a/b"/>
</dbReference>
<dbReference type="InterPro" id="IPR015867">
    <property type="entry name" value="N-reg_PII/ATP_PRibTrfase_C"/>
</dbReference>
<dbReference type="NCBIfam" id="TIGR00070">
    <property type="entry name" value="hisG"/>
    <property type="match status" value="1"/>
</dbReference>
<dbReference type="NCBIfam" id="TIGR03455">
    <property type="entry name" value="HisG_C-term"/>
    <property type="match status" value="1"/>
</dbReference>
<dbReference type="PANTHER" id="PTHR21403:SF8">
    <property type="entry name" value="ATP PHOSPHORIBOSYLTRANSFERASE"/>
    <property type="match status" value="1"/>
</dbReference>
<dbReference type="PANTHER" id="PTHR21403">
    <property type="entry name" value="ATP PHOSPHORIBOSYLTRANSFERASE ATP-PRTASE"/>
    <property type="match status" value="1"/>
</dbReference>
<dbReference type="Pfam" id="PF01634">
    <property type="entry name" value="HisG"/>
    <property type="match status" value="1"/>
</dbReference>
<dbReference type="Pfam" id="PF08029">
    <property type="entry name" value="HisG_C"/>
    <property type="match status" value="1"/>
</dbReference>
<dbReference type="SUPFAM" id="SSF54913">
    <property type="entry name" value="GlnB-like"/>
    <property type="match status" value="1"/>
</dbReference>
<dbReference type="SUPFAM" id="SSF53850">
    <property type="entry name" value="Periplasmic binding protein-like II"/>
    <property type="match status" value="1"/>
</dbReference>
<gene>
    <name evidence="1" type="primary">hisG</name>
    <name type="ordered locus">SCO1438</name>
    <name type="ORF">SC6D7.01</name>
    <name type="ORF">SC6D7A.01c</name>
</gene>
<organism>
    <name type="scientific">Streptomyces coelicolor (strain ATCC BAA-471 / A3(2) / M145)</name>
    <dbReference type="NCBI Taxonomy" id="100226"/>
    <lineage>
        <taxon>Bacteria</taxon>
        <taxon>Bacillati</taxon>
        <taxon>Actinomycetota</taxon>
        <taxon>Actinomycetes</taxon>
        <taxon>Kitasatosporales</taxon>
        <taxon>Streptomycetaceae</taxon>
        <taxon>Streptomyces</taxon>
        <taxon>Streptomyces albidoflavus group</taxon>
    </lineage>
</organism>
<feature type="chain" id="PRO_0000151868" description="ATP phosphoribosyltransferase">
    <location>
        <begin position="1"/>
        <end position="285"/>
    </location>
</feature>
<proteinExistence type="inferred from homology"/>
<protein>
    <recommendedName>
        <fullName evidence="1">ATP phosphoribosyltransferase</fullName>
        <shortName evidence="1">ATP-PRT</shortName>
        <shortName evidence="1">ATP-PRTase</shortName>
        <ecNumber evidence="1">2.4.2.17</ecNumber>
    </recommendedName>
</protein>
<reference key="1">
    <citation type="journal article" date="2002" name="Nature">
        <title>Complete genome sequence of the model actinomycete Streptomyces coelicolor A3(2).</title>
        <authorList>
            <person name="Bentley S.D."/>
            <person name="Chater K.F."/>
            <person name="Cerdeno-Tarraga A.-M."/>
            <person name="Challis G.L."/>
            <person name="Thomson N.R."/>
            <person name="James K.D."/>
            <person name="Harris D.E."/>
            <person name="Quail M.A."/>
            <person name="Kieser H."/>
            <person name="Harper D."/>
            <person name="Bateman A."/>
            <person name="Brown S."/>
            <person name="Chandra G."/>
            <person name="Chen C.W."/>
            <person name="Collins M."/>
            <person name="Cronin A."/>
            <person name="Fraser A."/>
            <person name="Goble A."/>
            <person name="Hidalgo J."/>
            <person name="Hornsby T."/>
            <person name="Howarth S."/>
            <person name="Huang C.-H."/>
            <person name="Kieser T."/>
            <person name="Larke L."/>
            <person name="Murphy L.D."/>
            <person name="Oliver K."/>
            <person name="O'Neil S."/>
            <person name="Rabbinowitsch E."/>
            <person name="Rajandream M.A."/>
            <person name="Rutherford K.M."/>
            <person name="Rutter S."/>
            <person name="Seeger K."/>
            <person name="Saunders D."/>
            <person name="Sharp S."/>
            <person name="Squares R."/>
            <person name="Squares S."/>
            <person name="Taylor K."/>
            <person name="Warren T."/>
            <person name="Wietzorrek A."/>
            <person name="Woodward J.R."/>
            <person name="Barrell B.G."/>
            <person name="Parkhill J."/>
            <person name="Hopwood D.A."/>
        </authorList>
    </citation>
    <scope>NUCLEOTIDE SEQUENCE [LARGE SCALE GENOMIC DNA]</scope>
    <source>
        <strain>ATCC BAA-471 / A3(2) / M145</strain>
    </source>
</reference>
<accession>Q8CK28</accession>